<sequence>MKYIAAYALLVLGGNSSPSADDVKKVLKSVGVDSEQDKLDALLKNLEGKQLHELIEAGSSKVSSLSAGAGPSGGAAAAGADAGAAEAEKEEEPQEEEADVNMGDIFGGDDEDY</sequence>
<dbReference type="EMBL" id="AF309640">
    <property type="protein sequence ID" value="AAG40861.1"/>
    <property type="molecule type" value="Genomic_DNA"/>
</dbReference>
<dbReference type="GO" id="GO:0022625">
    <property type="term" value="C:cytosolic large ribosomal subunit"/>
    <property type="evidence" value="ECO:0007669"/>
    <property type="project" value="InterPro"/>
</dbReference>
<dbReference type="GO" id="GO:0003735">
    <property type="term" value="F:structural constituent of ribosome"/>
    <property type="evidence" value="ECO:0007669"/>
    <property type="project" value="InterPro"/>
</dbReference>
<dbReference type="GO" id="GO:0002182">
    <property type="term" value="P:cytoplasmic translational elongation"/>
    <property type="evidence" value="ECO:0007669"/>
    <property type="project" value="InterPro"/>
</dbReference>
<dbReference type="CDD" id="cd05833">
    <property type="entry name" value="Ribosomal_P2"/>
    <property type="match status" value="1"/>
</dbReference>
<dbReference type="FunFam" id="1.10.10.1410:FF:000002">
    <property type="entry name" value="60S acidic ribosomal protein P2"/>
    <property type="match status" value="1"/>
</dbReference>
<dbReference type="Gene3D" id="1.10.10.1410">
    <property type="match status" value="1"/>
</dbReference>
<dbReference type="HAMAP" id="MF_01478">
    <property type="entry name" value="Ribosomal_L12_arch"/>
    <property type="match status" value="1"/>
</dbReference>
<dbReference type="InterPro" id="IPR038716">
    <property type="entry name" value="P1/P2_N_sf"/>
</dbReference>
<dbReference type="InterPro" id="IPR027534">
    <property type="entry name" value="Ribosomal_P1/P2"/>
</dbReference>
<dbReference type="InterPro" id="IPR044076">
    <property type="entry name" value="Ribosomal_P2"/>
</dbReference>
<dbReference type="PANTHER" id="PTHR21141">
    <property type="entry name" value="60S ACIDIC RIBOSOMAL PROTEIN FAMILY MEMBER"/>
    <property type="match status" value="1"/>
</dbReference>
<dbReference type="PANTHER" id="PTHR21141:SF5">
    <property type="entry name" value="LARGE RIBOSOMAL SUBUNIT PROTEIN P2"/>
    <property type="match status" value="1"/>
</dbReference>
<dbReference type="Pfam" id="PF00428">
    <property type="entry name" value="Ribosomal_60s"/>
    <property type="match status" value="1"/>
</dbReference>
<proteinExistence type="inferred from homology"/>
<keyword id="KW-0597">Phosphoprotein</keyword>
<keyword id="KW-0687">Ribonucleoprotein</keyword>
<keyword id="KW-0689">Ribosomal protein</keyword>
<name>RLA2_EUPRA</name>
<evidence type="ECO:0000250" key="1"/>
<evidence type="ECO:0000256" key="2">
    <source>
        <dbReference type="SAM" id="MobiDB-lite"/>
    </source>
</evidence>
<evidence type="ECO:0000305" key="3"/>
<accession>Q9GPU2</accession>
<protein>
    <recommendedName>
        <fullName evidence="3">Large ribosomal subunit protein P2</fullName>
    </recommendedName>
    <alternativeName>
        <fullName>60S acidic ribosomal protein P2</fullName>
    </alternativeName>
</protein>
<feature type="chain" id="PRO_0000157654" description="Large ribosomal subunit protein P2">
    <location>
        <begin position="1"/>
        <end position="113"/>
    </location>
</feature>
<feature type="region of interest" description="Disordered" evidence="2">
    <location>
        <begin position="60"/>
        <end position="113"/>
    </location>
</feature>
<feature type="compositionally biased region" description="Low complexity" evidence="2">
    <location>
        <begin position="74"/>
        <end position="85"/>
    </location>
</feature>
<feature type="compositionally biased region" description="Acidic residues" evidence="2">
    <location>
        <begin position="88"/>
        <end position="99"/>
    </location>
</feature>
<organism>
    <name type="scientific">Euplotes raikovi</name>
    <dbReference type="NCBI Taxonomy" id="5938"/>
    <lineage>
        <taxon>Eukaryota</taxon>
        <taxon>Sar</taxon>
        <taxon>Alveolata</taxon>
        <taxon>Ciliophora</taxon>
        <taxon>Intramacronucleata</taxon>
        <taxon>Spirotrichea</taxon>
        <taxon>Hypotrichia</taxon>
        <taxon>Euplotida</taxon>
        <taxon>Euplotidae</taxon>
        <taxon>Euplotes</taxon>
    </lineage>
</organism>
<comment type="function">
    <text evidence="1">Plays an important role in the elongation step of protein synthesis.</text>
</comment>
<comment type="subunit">
    <text evidence="1">P1 and P2 exist as dimers at the large ribosomal subunit.</text>
</comment>
<comment type="PTM">
    <text evidence="1">Phosphorylated.</text>
</comment>
<comment type="similarity">
    <text evidence="3">Belongs to the eukaryotic ribosomal protein P1/P2 family.</text>
</comment>
<reference key="1">
    <citation type="journal article" date="1999" name="J. Eukaryot. Microbiol.">
        <title>Molecular cloning of the gene encoding an acidic ribosomal protein of the P2 family from the ciliate Euplotes raikovi.</title>
        <authorList>
            <person name="Di Giuseppe G."/>
            <person name="Wirz A."/>
            <person name="Miceli C."/>
        </authorList>
    </citation>
    <scope>NUCLEOTIDE SEQUENCE [GENOMIC DNA]</scope>
</reference>